<gene>
    <name evidence="1" type="primary">panB</name>
    <name type="ordered locus">PSPTO_0961</name>
</gene>
<comment type="function">
    <text evidence="1">Catalyzes the reversible reaction in which hydroxymethyl group from 5,10-methylenetetrahydrofolate is transferred onto alpha-ketoisovalerate to form ketopantoate.</text>
</comment>
<comment type="catalytic activity">
    <reaction evidence="1">
        <text>3-methyl-2-oxobutanoate + (6R)-5,10-methylene-5,6,7,8-tetrahydrofolate + H2O = 2-dehydropantoate + (6S)-5,6,7,8-tetrahydrofolate</text>
        <dbReference type="Rhea" id="RHEA:11824"/>
        <dbReference type="ChEBI" id="CHEBI:11561"/>
        <dbReference type="ChEBI" id="CHEBI:11851"/>
        <dbReference type="ChEBI" id="CHEBI:15377"/>
        <dbReference type="ChEBI" id="CHEBI:15636"/>
        <dbReference type="ChEBI" id="CHEBI:57453"/>
        <dbReference type="EC" id="2.1.2.11"/>
    </reaction>
</comment>
<comment type="cofactor">
    <cofactor evidence="1">
        <name>Mg(2+)</name>
        <dbReference type="ChEBI" id="CHEBI:18420"/>
    </cofactor>
    <text evidence="1">Binds 1 Mg(2+) ion per subunit.</text>
</comment>
<comment type="pathway">
    <text evidence="1">Cofactor biosynthesis; (R)-pantothenate biosynthesis; (R)-pantoate from 3-methyl-2-oxobutanoate: step 1/2.</text>
</comment>
<comment type="subunit">
    <text evidence="1">Homodecamer; pentamer of dimers.</text>
</comment>
<comment type="subcellular location">
    <subcellularLocation>
        <location evidence="1">Cytoplasm</location>
    </subcellularLocation>
</comment>
<comment type="similarity">
    <text evidence="1">Belongs to the PanB family.</text>
</comment>
<proteinExistence type="inferred from homology"/>
<reference key="1">
    <citation type="journal article" date="2003" name="Proc. Natl. Acad. Sci. U.S.A.">
        <title>The complete genome sequence of the Arabidopsis and tomato pathogen Pseudomonas syringae pv. tomato DC3000.</title>
        <authorList>
            <person name="Buell C.R."/>
            <person name="Joardar V."/>
            <person name="Lindeberg M."/>
            <person name="Selengut J."/>
            <person name="Paulsen I.T."/>
            <person name="Gwinn M.L."/>
            <person name="Dodson R.J."/>
            <person name="DeBoy R.T."/>
            <person name="Durkin A.S."/>
            <person name="Kolonay J.F."/>
            <person name="Madupu R."/>
            <person name="Daugherty S.C."/>
            <person name="Brinkac L.M."/>
            <person name="Beanan M.J."/>
            <person name="Haft D.H."/>
            <person name="Nelson W.C."/>
            <person name="Davidsen T.M."/>
            <person name="Zafar N."/>
            <person name="Zhou L."/>
            <person name="Liu J."/>
            <person name="Yuan Q."/>
            <person name="Khouri H.M."/>
            <person name="Fedorova N.B."/>
            <person name="Tran B."/>
            <person name="Russell D."/>
            <person name="Berry K.J."/>
            <person name="Utterback T.R."/>
            <person name="Van Aken S.E."/>
            <person name="Feldblyum T.V."/>
            <person name="D'Ascenzo M."/>
            <person name="Deng W.-L."/>
            <person name="Ramos A.R."/>
            <person name="Alfano J.R."/>
            <person name="Cartinhour S."/>
            <person name="Chatterjee A.K."/>
            <person name="Delaney T.P."/>
            <person name="Lazarowitz S.G."/>
            <person name="Martin G.B."/>
            <person name="Schneider D.J."/>
            <person name="Tang X."/>
            <person name="Bender C.L."/>
            <person name="White O."/>
            <person name="Fraser C.M."/>
            <person name="Collmer A."/>
        </authorList>
    </citation>
    <scope>NUCLEOTIDE SEQUENCE [LARGE SCALE GENOMIC DNA]</scope>
    <source>
        <strain>ATCC BAA-871 / DC3000</strain>
    </source>
</reference>
<dbReference type="EC" id="2.1.2.11" evidence="1"/>
<dbReference type="EMBL" id="AE016853">
    <property type="protein sequence ID" value="AAO54495.1"/>
    <property type="molecule type" value="Genomic_DNA"/>
</dbReference>
<dbReference type="RefSeq" id="NP_790800.1">
    <property type="nucleotide sequence ID" value="NC_004578.1"/>
</dbReference>
<dbReference type="RefSeq" id="WP_005770519.1">
    <property type="nucleotide sequence ID" value="NC_004578.1"/>
</dbReference>
<dbReference type="SMR" id="Q888Q5"/>
<dbReference type="STRING" id="223283.PSPTO_0961"/>
<dbReference type="GeneID" id="1182590"/>
<dbReference type="KEGG" id="pst:PSPTO_0961"/>
<dbReference type="PATRIC" id="fig|223283.9.peg.971"/>
<dbReference type="eggNOG" id="COG0413">
    <property type="taxonomic scope" value="Bacteria"/>
</dbReference>
<dbReference type="HOGENOM" id="CLU_036645_1_0_6"/>
<dbReference type="OrthoDB" id="9781789at2"/>
<dbReference type="PhylomeDB" id="Q888Q5"/>
<dbReference type="UniPathway" id="UPA00028">
    <property type="reaction ID" value="UER00003"/>
</dbReference>
<dbReference type="Proteomes" id="UP000002515">
    <property type="component" value="Chromosome"/>
</dbReference>
<dbReference type="GO" id="GO:0005737">
    <property type="term" value="C:cytoplasm"/>
    <property type="evidence" value="ECO:0007669"/>
    <property type="project" value="UniProtKB-SubCell"/>
</dbReference>
<dbReference type="GO" id="GO:0003864">
    <property type="term" value="F:3-methyl-2-oxobutanoate hydroxymethyltransferase activity"/>
    <property type="evidence" value="ECO:0007669"/>
    <property type="project" value="UniProtKB-UniRule"/>
</dbReference>
<dbReference type="GO" id="GO:0000287">
    <property type="term" value="F:magnesium ion binding"/>
    <property type="evidence" value="ECO:0007669"/>
    <property type="project" value="TreeGrafter"/>
</dbReference>
<dbReference type="GO" id="GO:0015940">
    <property type="term" value="P:pantothenate biosynthetic process"/>
    <property type="evidence" value="ECO:0007669"/>
    <property type="project" value="UniProtKB-UniRule"/>
</dbReference>
<dbReference type="CDD" id="cd06557">
    <property type="entry name" value="KPHMT-like"/>
    <property type="match status" value="1"/>
</dbReference>
<dbReference type="FunFam" id="3.20.20.60:FF:000003">
    <property type="entry name" value="3-methyl-2-oxobutanoate hydroxymethyltransferase"/>
    <property type="match status" value="1"/>
</dbReference>
<dbReference type="Gene3D" id="3.20.20.60">
    <property type="entry name" value="Phosphoenolpyruvate-binding domains"/>
    <property type="match status" value="1"/>
</dbReference>
<dbReference type="HAMAP" id="MF_00156">
    <property type="entry name" value="PanB"/>
    <property type="match status" value="1"/>
</dbReference>
<dbReference type="InterPro" id="IPR003700">
    <property type="entry name" value="Pantoate_hydroxy_MeTrfase"/>
</dbReference>
<dbReference type="InterPro" id="IPR015813">
    <property type="entry name" value="Pyrv/PenolPyrv_kinase-like_dom"/>
</dbReference>
<dbReference type="InterPro" id="IPR040442">
    <property type="entry name" value="Pyrv_kinase-like_dom_sf"/>
</dbReference>
<dbReference type="NCBIfam" id="TIGR00222">
    <property type="entry name" value="panB"/>
    <property type="match status" value="1"/>
</dbReference>
<dbReference type="NCBIfam" id="NF001452">
    <property type="entry name" value="PRK00311.1"/>
    <property type="match status" value="1"/>
</dbReference>
<dbReference type="PANTHER" id="PTHR20881">
    <property type="entry name" value="3-METHYL-2-OXOBUTANOATE HYDROXYMETHYLTRANSFERASE"/>
    <property type="match status" value="1"/>
</dbReference>
<dbReference type="PANTHER" id="PTHR20881:SF0">
    <property type="entry name" value="3-METHYL-2-OXOBUTANOATE HYDROXYMETHYLTRANSFERASE"/>
    <property type="match status" value="1"/>
</dbReference>
<dbReference type="Pfam" id="PF02548">
    <property type="entry name" value="Pantoate_transf"/>
    <property type="match status" value="1"/>
</dbReference>
<dbReference type="PIRSF" id="PIRSF000388">
    <property type="entry name" value="Pantoate_hydroxy_MeTrfase"/>
    <property type="match status" value="1"/>
</dbReference>
<dbReference type="SUPFAM" id="SSF51621">
    <property type="entry name" value="Phosphoenolpyruvate/pyruvate domain"/>
    <property type="match status" value="1"/>
</dbReference>
<organism>
    <name type="scientific">Pseudomonas syringae pv. tomato (strain ATCC BAA-871 / DC3000)</name>
    <dbReference type="NCBI Taxonomy" id="223283"/>
    <lineage>
        <taxon>Bacteria</taxon>
        <taxon>Pseudomonadati</taxon>
        <taxon>Pseudomonadota</taxon>
        <taxon>Gammaproteobacteria</taxon>
        <taxon>Pseudomonadales</taxon>
        <taxon>Pseudomonadaceae</taxon>
        <taxon>Pseudomonas</taxon>
    </lineage>
</organism>
<name>PANB_PSESM</name>
<protein>
    <recommendedName>
        <fullName evidence="1">3-methyl-2-oxobutanoate hydroxymethyltransferase</fullName>
        <ecNumber evidence="1">2.1.2.11</ecNumber>
    </recommendedName>
    <alternativeName>
        <fullName evidence="1">Ketopantoate hydroxymethyltransferase</fullName>
        <shortName evidence="1">KPHMT</shortName>
    </alternativeName>
</protein>
<feature type="chain" id="PRO_0000184878" description="3-methyl-2-oxobutanoate hydroxymethyltransferase">
    <location>
        <begin position="1"/>
        <end position="266"/>
    </location>
</feature>
<feature type="active site" description="Proton acceptor" evidence="1">
    <location>
        <position position="181"/>
    </location>
</feature>
<feature type="binding site" evidence="1">
    <location>
        <begin position="45"/>
        <end position="46"/>
    </location>
    <ligand>
        <name>3-methyl-2-oxobutanoate</name>
        <dbReference type="ChEBI" id="CHEBI:11851"/>
    </ligand>
</feature>
<feature type="binding site" evidence="1">
    <location>
        <position position="45"/>
    </location>
    <ligand>
        <name>Mg(2+)</name>
        <dbReference type="ChEBI" id="CHEBI:18420"/>
    </ligand>
</feature>
<feature type="binding site" evidence="1">
    <location>
        <position position="84"/>
    </location>
    <ligand>
        <name>3-methyl-2-oxobutanoate</name>
        <dbReference type="ChEBI" id="CHEBI:11851"/>
    </ligand>
</feature>
<feature type="binding site" evidence="1">
    <location>
        <position position="84"/>
    </location>
    <ligand>
        <name>Mg(2+)</name>
        <dbReference type="ChEBI" id="CHEBI:18420"/>
    </ligand>
</feature>
<feature type="binding site" evidence="1">
    <location>
        <position position="112"/>
    </location>
    <ligand>
        <name>3-methyl-2-oxobutanoate</name>
        <dbReference type="ChEBI" id="CHEBI:11851"/>
    </ligand>
</feature>
<feature type="binding site" evidence="1">
    <location>
        <position position="114"/>
    </location>
    <ligand>
        <name>Mg(2+)</name>
        <dbReference type="ChEBI" id="CHEBI:18420"/>
    </ligand>
</feature>
<keyword id="KW-0963">Cytoplasm</keyword>
<keyword id="KW-0460">Magnesium</keyword>
<keyword id="KW-0479">Metal-binding</keyword>
<keyword id="KW-0566">Pantothenate biosynthesis</keyword>
<keyword id="KW-1185">Reference proteome</keyword>
<keyword id="KW-0808">Transferase</keyword>
<accession>Q888Q5</accession>
<evidence type="ECO:0000255" key="1">
    <source>
        <dbReference type="HAMAP-Rule" id="MF_00156"/>
    </source>
</evidence>
<sequence>MPNITVTSLLAMKHKGEKITMLTCYDATFAHTACQAGVEVLLIGDSLGMVLQGHDSTLPVTTAETAYHVACVKRGNQGALILADLPFMANATLEQTFINSTTLMQAGAHMIKVEGAAWLGESIRLLAERGIPVCAHMGLTPQSVNVLGGYKVQGRLEAQARQMRADAIALEQAGAAMILLECVPSELAEEITHAVKIPVIGIGAGSATDGQVLVLHDMLGLSITGRVPKFVKNFMIGQPDIQSAIQAYVSAVKDVSFPAIEHGFSA</sequence>